<evidence type="ECO:0000250" key="1">
    <source>
        <dbReference type="UniProtKB" id="Q9H2S9"/>
    </source>
</evidence>
<evidence type="ECO:0000250" key="2">
    <source>
        <dbReference type="UniProtKB" id="Q9UKS7"/>
    </source>
</evidence>
<evidence type="ECO:0000255" key="3">
    <source>
        <dbReference type="PROSITE-ProRule" id="PRU00042"/>
    </source>
</evidence>
<evidence type="ECO:0000256" key="4">
    <source>
        <dbReference type="SAM" id="MobiDB-lite"/>
    </source>
</evidence>
<evidence type="ECO:0000269" key="5">
    <source>
    </source>
</evidence>
<evidence type="ECO:0000269" key="6">
    <source>
    </source>
</evidence>
<evidence type="ECO:0000269" key="7">
    <source>
    </source>
</evidence>
<evidence type="ECO:0000269" key="8">
    <source>
    </source>
</evidence>
<evidence type="ECO:0000303" key="9">
    <source>
    </source>
</evidence>
<evidence type="ECO:0000303" key="10">
    <source>
    </source>
</evidence>
<evidence type="ECO:0000303" key="11">
    <source>
    </source>
</evidence>
<evidence type="ECO:0000305" key="12"/>
<feature type="chain" id="PRO_0000299469" description="Zinc finger protein Eos">
    <location>
        <begin position="1"/>
        <end position="586"/>
    </location>
</feature>
<feature type="zinc finger region" description="C2H2-type 1" evidence="3">
    <location>
        <begin position="159"/>
        <end position="181"/>
    </location>
</feature>
<feature type="zinc finger region" description="C2H2-type 2" evidence="3">
    <location>
        <begin position="187"/>
        <end position="209"/>
    </location>
</feature>
<feature type="zinc finger region" description="C2H2-type 3" evidence="3">
    <location>
        <begin position="215"/>
        <end position="237"/>
    </location>
</feature>
<feature type="zinc finger region" description="C2H2-type 4" evidence="3">
    <location>
        <begin position="248"/>
        <end position="271"/>
    </location>
</feature>
<feature type="zinc finger region" description="C2H2-type 5" evidence="3">
    <location>
        <begin position="531"/>
        <end position="553"/>
    </location>
</feature>
<feature type="zinc finger region" description="C2H2-type 6" evidence="3">
    <location>
        <begin position="559"/>
        <end position="583"/>
    </location>
</feature>
<feature type="region of interest" description="Disordered" evidence="4">
    <location>
        <begin position="1"/>
        <end position="42"/>
    </location>
</feature>
<feature type="region of interest" description="Disordered" evidence="4">
    <location>
        <begin position="68"/>
        <end position="98"/>
    </location>
</feature>
<feature type="region of interest" description="Interaction with FOXP3" evidence="8">
    <location>
        <begin position="281"/>
        <end position="586"/>
    </location>
</feature>
<feature type="region of interest" description="Disordered" evidence="4">
    <location>
        <begin position="413"/>
        <end position="490"/>
    </location>
</feature>
<feature type="short sequence motif" description="CTBP-binding motif PEDLG">
    <location>
        <begin position="423"/>
        <end position="433"/>
    </location>
</feature>
<feature type="compositionally biased region" description="Basic and acidic residues" evidence="4">
    <location>
        <begin position="25"/>
        <end position="34"/>
    </location>
</feature>
<feature type="compositionally biased region" description="Polar residues" evidence="4">
    <location>
        <begin position="79"/>
        <end position="98"/>
    </location>
</feature>
<feature type="compositionally biased region" description="Pro residues" evidence="4">
    <location>
        <begin position="476"/>
        <end position="485"/>
    </location>
</feature>
<feature type="modified residue" description="Phosphoserine" evidence="2">
    <location>
        <position position="105"/>
    </location>
</feature>
<feature type="modified residue" description="N6-acetyllysine" evidence="2">
    <location>
        <position position="335"/>
    </location>
</feature>
<feature type="cross-link" description="Glycyl lysine isopeptide (Lys-Gly) (interchain with G-Cter in SUMO2)" evidence="1">
    <location>
        <position position="100"/>
    </location>
</feature>
<feature type="cross-link" description="Glycyl lysine isopeptide (Lys-Gly) (interchain with G-Cter in SUMO2)" evidence="1">
    <location>
        <position position="501"/>
    </location>
</feature>
<feature type="splice variant" id="VSP_027689" description="In isoform 3." evidence="11">
    <original>MHTPPALPRRFQGGGRVRTPGSHRQGKDNLERELSGGCAPDFLPQAQDSNHFIMESLFCES</original>
    <variation>MFIPVG</variation>
    <location>
        <begin position="1"/>
        <end position="61"/>
    </location>
</feature>
<feature type="splice variant" id="VSP_027690" description="In isoform 2." evidence="9 10">
    <location>
        <begin position="1"/>
        <end position="53"/>
    </location>
</feature>
<feature type="splice variant" id="VSP_027691" description="In isoform 4." evidence="11">
    <original>YEFSSHIVRGEHKVG</original>
    <variation>TRRLVPRLLGPVMINGREKGDVSFLSANFQYNQKNCPRMNYTYVPVNHSTLVPARMGRTQLGVTSTALSILSSRHRAGEAVFSGGCRHSGYSDNRGFVRPCRRRHSSIAGGSLSL</variation>
    <location>
        <begin position="572"/>
        <end position="586"/>
    </location>
</feature>
<feature type="sequence conflict" description="In Ref. 1; BAA36213." evidence="12" ref="1">
    <original>EF</original>
    <variation>DS</variation>
    <location>
        <begin position="70"/>
        <end position="71"/>
    </location>
</feature>
<feature type="sequence conflict" description="In Ref. 2; BAE41808." evidence="12" ref="2">
    <original>E</original>
    <variation>V</variation>
    <location>
        <position position="291"/>
    </location>
</feature>
<feature type="sequence conflict" description="In Ref. 2; BAE41808." evidence="12" ref="2">
    <original>G</original>
    <variation>S</variation>
    <location>
        <position position="352"/>
    </location>
</feature>
<feature type="sequence conflict" description="In Ref. 2; BAC40912." evidence="12" ref="2">
    <original>P</original>
    <variation>T</variation>
    <location>
        <position position="478"/>
    </location>
</feature>
<proteinExistence type="evidence at protein level"/>
<name>IKZF4_MOUSE</name>
<comment type="function">
    <text evidence="5 7 8">DNA-binding protein that binds to the 5'GGGAATRCC-3' Ikaros-binding sequence. Interacts with SPI1 and MITF to repress transcription of the CTSK and ACP5 promoters via recruitment of corepressors SIN3A and CTBP2. May be involved in the development of central and peripheral nervous systems. Essential for the inhibitory function of regulatory T-cells (Treg). Mediates FOXP3-mediated gene silencing in regulatory T-cells (Treg) via recruitment of corepressor CTBP1 (PubMed:19696312).</text>
</comment>
<comment type="subunit">
    <text evidence="1 5 6 7 8">Self-associates. Interacts with other family members; IKZF1, IKZF2, IKZF3 and IKZF5 (By similarity). Interacts with CTBP2, SPI1 and MITF. Interacts with FOXP3 and CTBP1.</text>
</comment>
<comment type="subcellular location">
    <subcellularLocation>
        <location>Nucleus</location>
    </subcellularLocation>
</comment>
<comment type="alternative products">
    <event type="alternative splicing"/>
    <isoform>
        <id>Q8C208-1</id>
        <name>1</name>
        <sequence type="displayed"/>
    </isoform>
    <isoform>
        <id>Q8C208-2</id>
        <name>2</name>
        <sequence type="described" ref="VSP_027690"/>
    </isoform>
    <isoform>
        <id>Q8C208-3</id>
        <name>3</name>
        <sequence type="described" ref="VSP_027689"/>
    </isoform>
    <isoform>
        <id>Q8C208-4</id>
        <name>4</name>
        <sequence type="described" ref="VSP_027691"/>
    </isoform>
</comment>
<comment type="tissue specificity">
    <text evidence="5 7">Expressed mainly in the brain. Up-regulated in long term cultured astrocytes. Down-regulated during osteoclast differentiation.</text>
</comment>
<comment type="developmental stage">
    <text evidence="5">Highly expressed in the brain at 15 dpc and 18 dpc. Expression gradually decreased as postnatal development proceeded. No expression detected in the liver, kidney, lung, thymus or spleen during all developmental stages.</text>
</comment>
<comment type="domain">
    <text>The N-terminal zinc fingers are involved in sequence-specific DNA binding.</text>
</comment>
<comment type="domain">
    <text>C-terminal zinc fingers mediate homodimerization.</text>
</comment>
<comment type="miscellaneous">
    <text>Eos is a Greek word for rising sun.</text>
</comment>
<comment type="similarity">
    <text evidence="12">Belongs to the Ikaros C2H2-type zinc-finger protein family.</text>
</comment>
<comment type="sequence caution" evidence="12">
    <conflict type="frameshift">
        <sequence resource="EMBL-CDS" id="BAA36213"/>
    </conflict>
</comment>
<protein>
    <recommendedName>
        <fullName>Zinc finger protein Eos</fullName>
    </recommendedName>
    <alternativeName>
        <fullName>Ikaros family zinc finger protein 4</fullName>
    </alternativeName>
</protein>
<sequence length="586" mass="64155">MHTPPALPRRFQGGGRVRTPGSHRQGKDNLERELSGGCAPDFLPQAQDSNHFIMESLFCESSGDSSLEKEFLGAPVGPSVSTPNSQHSSPSRSLSANSIKVEMYSDEESSRLLGPDERLLDKDDSVIVEDSLSEPLGYCDGSGPEPHSPGGIRLPNGKLKCDVCGMVCIGPNVLMVHKRSHTGERPFHCNQCGASFTQKGNLLRHIKLHSGEKPFKCPFCNYACRRRDALTGHLRTHSVSSPTVGKPYKCNYCGRSYKQQSTLEEHKERCHNYLQSLSTDAQALTGQPGDEIRDLEMVPDSMLHPSTERPTFIDRLANSLTKRKRSTPQKFVGEKQMRFSLSDLPYDVNASGGYEKDVELVAHHGLEPGFGGSLAFVGTEHLRPLRLPPTNCISELTPVISSVYTQMQPIPSRLELPGSREAGEGPEDLGDGGPLLYRARGSLTDPGASPSNGCQDSTDTESNHEDRIGGVVSLPQGPPPQPPPTIVVGRHSPAYAKEDPKPQEGLLRGTPGPSKEVLRVVGESGEPVKAFKCEHCRILFLDHVMFTIHMGCHGFRDPFECNICGYHSQDRYEFSSHIVRGEHKVG</sequence>
<organism>
    <name type="scientific">Mus musculus</name>
    <name type="common">Mouse</name>
    <dbReference type="NCBI Taxonomy" id="10090"/>
    <lineage>
        <taxon>Eukaryota</taxon>
        <taxon>Metazoa</taxon>
        <taxon>Chordata</taxon>
        <taxon>Craniata</taxon>
        <taxon>Vertebrata</taxon>
        <taxon>Euteleostomi</taxon>
        <taxon>Mammalia</taxon>
        <taxon>Eutheria</taxon>
        <taxon>Euarchontoglires</taxon>
        <taxon>Glires</taxon>
        <taxon>Rodentia</taxon>
        <taxon>Myomorpha</taxon>
        <taxon>Muroidea</taxon>
        <taxon>Muridae</taxon>
        <taxon>Murinae</taxon>
        <taxon>Mus</taxon>
        <taxon>Mus</taxon>
    </lineage>
</organism>
<accession>Q8C208</accession>
<accession>B9EJ21</accession>
<accession>Q3TCZ7</accession>
<accession>Q9Z2Z2</accession>
<dbReference type="EMBL" id="AB017615">
    <property type="protein sequence ID" value="BAA36213.1"/>
    <property type="status" value="ALT_FRAME"/>
    <property type="molecule type" value="mRNA"/>
</dbReference>
<dbReference type="EMBL" id="AK089522">
    <property type="protein sequence ID" value="BAC40912.1"/>
    <property type="molecule type" value="mRNA"/>
</dbReference>
<dbReference type="EMBL" id="AK170453">
    <property type="protein sequence ID" value="BAE41808.1"/>
    <property type="molecule type" value="mRNA"/>
</dbReference>
<dbReference type="EMBL" id="AC117232">
    <property type="status" value="NOT_ANNOTATED_CDS"/>
    <property type="molecule type" value="Genomic_DNA"/>
</dbReference>
<dbReference type="EMBL" id="BC141286">
    <property type="protein sequence ID" value="AAI41287.1"/>
    <property type="molecule type" value="mRNA"/>
</dbReference>
<dbReference type="CCDS" id="CCDS24284.2">
    <molecule id="Q8C208-1"/>
</dbReference>
<dbReference type="RefSeq" id="NP_001345465.1">
    <molecule id="Q8C208-3"/>
    <property type="nucleotide sequence ID" value="NM_001358536.2"/>
</dbReference>
<dbReference type="RefSeq" id="NP_001345466.1">
    <molecule id="Q8C208-3"/>
    <property type="nucleotide sequence ID" value="NM_001358537.2"/>
</dbReference>
<dbReference type="RefSeq" id="NP_035902.2">
    <molecule id="Q8C208-1"/>
    <property type="nucleotide sequence ID" value="NM_011772.4"/>
</dbReference>
<dbReference type="RefSeq" id="XP_006513677.1">
    <property type="nucleotide sequence ID" value="XM_006513614.2"/>
</dbReference>
<dbReference type="RefSeq" id="XP_006513678.1">
    <property type="nucleotide sequence ID" value="XM_006513615.2"/>
</dbReference>
<dbReference type="RefSeq" id="XP_011241744.1">
    <property type="nucleotide sequence ID" value="XM_011243442.2"/>
</dbReference>
<dbReference type="RefSeq" id="XP_030100938.1">
    <molecule id="Q8C208-3"/>
    <property type="nucleotide sequence ID" value="XM_030245078.2"/>
</dbReference>
<dbReference type="SMR" id="Q8C208"/>
<dbReference type="BioGRID" id="204703">
    <property type="interactions" value="1"/>
</dbReference>
<dbReference type="FunCoup" id="Q8C208">
    <property type="interactions" value="1373"/>
</dbReference>
<dbReference type="STRING" id="10090.ENSMUSP00000114404"/>
<dbReference type="GlyGen" id="Q8C208">
    <property type="glycosylation" value="2 sites, 1 O-linked glycan (1 site)"/>
</dbReference>
<dbReference type="iPTMnet" id="Q8C208"/>
<dbReference type="PhosphoSitePlus" id="Q8C208"/>
<dbReference type="jPOST" id="Q8C208"/>
<dbReference type="PaxDb" id="10090-ENSMUSP00000114404"/>
<dbReference type="ProteomicsDB" id="267226">
    <molecule id="Q8C208-1"/>
</dbReference>
<dbReference type="ProteomicsDB" id="267227">
    <molecule id="Q8C208-2"/>
</dbReference>
<dbReference type="ProteomicsDB" id="267228">
    <molecule id="Q8C208-3"/>
</dbReference>
<dbReference type="ProteomicsDB" id="267229">
    <molecule id="Q8C208-4"/>
</dbReference>
<dbReference type="Antibodypedia" id="27854">
    <property type="antibodies" value="181 antibodies from 30 providers"/>
</dbReference>
<dbReference type="DNASU" id="22781"/>
<dbReference type="Ensembl" id="ENSMUST00000133342.10">
    <molecule id="Q8C208-1"/>
    <property type="protein sequence ID" value="ENSMUSP00000114404.2"/>
    <property type="gene ID" value="ENSMUSG00000002578.19"/>
</dbReference>
<dbReference type="Ensembl" id="ENSMUST00000221150.2">
    <molecule id="Q8C208-4"/>
    <property type="protein sequence ID" value="ENSMUSP00000152617.2"/>
    <property type="gene ID" value="ENSMUSG00000002578.19"/>
</dbReference>
<dbReference type="Ensembl" id="ENSMUST00000222067.2">
    <molecule id="Q8C208-2"/>
    <property type="protein sequence ID" value="ENSMUSP00000152234.2"/>
    <property type="gene ID" value="ENSMUSG00000002578.19"/>
</dbReference>
<dbReference type="GeneID" id="22781"/>
<dbReference type="KEGG" id="mmu:22781"/>
<dbReference type="UCSC" id="uc007hnp.1">
    <molecule id="Q8C208-1"/>
    <property type="organism name" value="mouse"/>
</dbReference>
<dbReference type="UCSC" id="uc011xqg.1">
    <molecule id="Q8C208-3"/>
    <property type="organism name" value="mouse"/>
</dbReference>
<dbReference type="AGR" id="MGI:1343139"/>
<dbReference type="CTD" id="64375"/>
<dbReference type="MGI" id="MGI:1343139">
    <property type="gene designation" value="Ikzf4"/>
</dbReference>
<dbReference type="VEuPathDB" id="HostDB:ENSMUSG00000002578"/>
<dbReference type="eggNOG" id="KOG1721">
    <property type="taxonomic scope" value="Eukaryota"/>
</dbReference>
<dbReference type="GeneTree" id="ENSGT00940000158308"/>
<dbReference type="HOGENOM" id="CLU_025502_0_0_1"/>
<dbReference type="InParanoid" id="Q8C208"/>
<dbReference type="OMA" id="LCGMVCI"/>
<dbReference type="OrthoDB" id="39523at9989"/>
<dbReference type="PhylomeDB" id="Q8C208"/>
<dbReference type="TreeFam" id="TF331189"/>
<dbReference type="BioGRID-ORCS" id="22781">
    <property type="hits" value="1 hit in 77 CRISPR screens"/>
</dbReference>
<dbReference type="ChiTaRS" id="Ikzf4">
    <property type="organism name" value="mouse"/>
</dbReference>
<dbReference type="PRO" id="PR:Q8C208"/>
<dbReference type="Proteomes" id="UP000000589">
    <property type="component" value="Chromosome 10"/>
</dbReference>
<dbReference type="RNAct" id="Q8C208">
    <property type="molecule type" value="protein"/>
</dbReference>
<dbReference type="Bgee" id="ENSMUSG00000002578">
    <property type="expression patterns" value="Expressed in rostral migratory stream and 183 other cell types or tissues"/>
</dbReference>
<dbReference type="ExpressionAtlas" id="Q8C208">
    <property type="expression patterns" value="baseline and differential"/>
</dbReference>
<dbReference type="GO" id="GO:0016604">
    <property type="term" value="C:nuclear body"/>
    <property type="evidence" value="ECO:0007669"/>
    <property type="project" value="Ensembl"/>
</dbReference>
<dbReference type="GO" id="GO:0032991">
    <property type="term" value="C:protein-containing complex"/>
    <property type="evidence" value="ECO:0007669"/>
    <property type="project" value="Ensembl"/>
</dbReference>
<dbReference type="GO" id="GO:0043425">
    <property type="term" value="F:bHLH transcription factor binding"/>
    <property type="evidence" value="ECO:0000353"/>
    <property type="project" value="MGI"/>
</dbReference>
<dbReference type="GO" id="GO:0042802">
    <property type="term" value="F:identical protein binding"/>
    <property type="evidence" value="ECO:0000353"/>
    <property type="project" value="MGI"/>
</dbReference>
<dbReference type="GO" id="GO:0019904">
    <property type="term" value="F:protein domain specific binding"/>
    <property type="evidence" value="ECO:0007669"/>
    <property type="project" value="Ensembl"/>
</dbReference>
<dbReference type="GO" id="GO:0043565">
    <property type="term" value="F:sequence-specific DNA binding"/>
    <property type="evidence" value="ECO:0000314"/>
    <property type="project" value="MGI"/>
</dbReference>
<dbReference type="GO" id="GO:0008270">
    <property type="term" value="F:zinc ion binding"/>
    <property type="evidence" value="ECO:0007669"/>
    <property type="project" value="UniProtKB-KW"/>
</dbReference>
<dbReference type="GO" id="GO:0045892">
    <property type="term" value="P:negative regulation of DNA-templated transcription"/>
    <property type="evidence" value="ECO:0000353"/>
    <property type="project" value="MGI"/>
</dbReference>
<dbReference type="GO" id="GO:0045944">
    <property type="term" value="P:positive regulation of transcription by RNA polymerase II"/>
    <property type="evidence" value="ECO:0000315"/>
    <property type="project" value="MGI"/>
</dbReference>
<dbReference type="GO" id="GO:0051260">
    <property type="term" value="P:protein homooligomerization"/>
    <property type="evidence" value="ECO:0007669"/>
    <property type="project" value="Ensembl"/>
</dbReference>
<dbReference type="FunFam" id="3.30.160.60:FF:000073">
    <property type="entry name" value="IKAROS family zinc finger 1"/>
    <property type="match status" value="1"/>
</dbReference>
<dbReference type="FunFam" id="3.30.160.60:FF:000525">
    <property type="entry name" value="IKAROS family zinc finger 1"/>
    <property type="match status" value="1"/>
</dbReference>
<dbReference type="FunFam" id="3.30.160.60:FF:000124">
    <property type="entry name" value="IKAROS family zinc finger 4"/>
    <property type="match status" value="1"/>
</dbReference>
<dbReference type="FunFam" id="3.30.160.60:FF:000372">
    <property type="entry name" value="IKAROS family zinc finger 4"/>
    <property type="match status" value="1"/>
</dbReference>
<dbReference type="FunFam" id="3.30.160.60:FF:000168">
    <property type="entry name" value="zinc finger protein Eos isoform X1"/>
    <property type="match status" value="1"/>
</dbReference>
<dbReference type="Gene3D" id="3.30.160.60">
    <property type="entry name" value="Classic Zinc Finger"/>
    <property type="match status" value="5"/>
</dbReference>
<dbReference type="InterPro" id="IPR050589">
    <property type="entry name" value="Ikaros_C2H2-ZF"/>
</dbReference>
<dbReference type="InterPro" id="IPR036236">
    <property type="entry name" value="Znf_C2H2_sf"/>
</dbReference>
<dbReference type="InterPro" id="IPR013087">
    <property type="entry name" value="Znf_C2H2_type"/>
</dbReference>
<dbReference type="PANTHER" id="PTHR24404">
    <property type="entry name" value="ZINC FINGER PROTEIN"/>
    <property type="match status" value="1"/>
</dbReference>
<dbReference type="PANTHER" id="PTHR24404:SF28">
    <property type="entry name" value="ZINC FINGER PROTEIN EOS"/>
    <property type="match status" value="1"/>
</dbReference>
<dbReference type="Pfam" id="PF00096">
    <property type="entry name" value="zf-C2H2"/>
    <property type="match status" value="3"/>
</dbReference>
<dbReference type="SMART" id="SM00355">
    <property type="entry name" value="ZnF_C2H2"/>
    <property type="match status" value="6"/>
</dbReference>
<dbReference type="SUPFAM" id="SSF57667">
    <property type="entry name" value="beta-beta-alpha zinc fingers"/>
    <property type="match status" value="3"/>
</dbReference>
<dbReference type="PROSITE" id="PS00028">
    <property type="entry name" value="ZINC_FINGER_C2H2_1"/>
    <property type="match status" value="5"/>
</dbReference>
<dbReference type="PROSITE" id="PS50157">
    <property type="entry name" value="ZINC_FINGER_C2H2_2"/>
    <property type="match status" value="4"/>
</dbReference>
<reference key="1">
    <citation type="journal article" date="1999" name="FEBS Lett.">
        <title>Eos: a novel member of the Ikaros gene family expressed predominantly in the developing nervous system.</title>
        <authorList>
            <person name="Honma Y."/>
            <person name="Kiyosawa H."/>
            <person name="Mori T."/>
            <person name="Oguri A."/>
            <person name="Nikaido T."/>
            <person name="Kanazawa K."/>
            <person name="Tojo M."/>
            <person name="Takeda J."/>
            <person name="Tanno Y."/>
            <person name="Yokoya S."/>
            <person name="Kawabata I."/>
            <person name="Ikeda H."/>
            <person name="Wanaka A."/>
        </authorList>
    </citation>
    <scope>NUCLEOTIDE SEQUENCE [MRNA] (ISOFORM 2)</scope>
    <scope>FUNCTION</scope>
    <scope>INTERACTION WITH IKZF1</scope>
    <scope>TISSUE SPECIFICITY</scope>
    <scope>DEVELOPMENTAL STAGE</scope>
    <source>
        <strain>ICR</strain>
    </source>
</reference>
<reference key="2">
    <citation type="journal article" date="2005" name="Science">
        <title>The transcriptional landscape of the mammalian genome.</title>
        <authorList>
            <person name="Carninci P."/>
            <person name="Kasukawa T."/>
            <person name="Katayama S."/>
            <person name="Gough J."/>
            <person name="Frith M.C."/>
            <person name="Maeda N."/>
            <person name="Oyama R."/>
            <person name="Ravasi T."/>
            <person name="Lenhard B."/>
            <person name="Wells C."/>
            <person name="Kodzius R."/>
            <person name="Shimokawa K."/>
            <person name="Bajic V.B."/>
            <person name="Brenner S.E."/>
            <person name="Batalov S."/>
            <person name="Forrest A.R."/>
            <person name="Zavolan M."/>
            <person name="Davis M.J."/>
            <person name="Wilming L.G."/>
            <person name="Aidinis V."/>
            <person name="Allen J.E."/>
            <person name="Ambesi-Impiombato A."/>
            <person name="Apweiler R."/>
            <person name="Aturaliya R.N."/>
            <person name="Bailey T.L."/>
            <person name="Bansal M."/>
            <person name="Baxter L."/>
            <person name="Beisel K.W."/>
            <person name="Bersano T."/>
            <person name="Bono H."/>
            <person name="Chalk A.M."/>
            <person name="Chiu K.P."/>
            <person name="Choudhary V."/>
            <person name="Christoffels A."/>
            <person name="Clutterbuck D.R."/>
            <person name="Crowe M.L."/>
            <person name="Dalla E."/>
            <person name="Dalrymple B.P."/>
            <person name="de Bono B."/>
            <person name="Della Gatta G."/>
            <person name="di Bernardo D."/>
            <person name="Down T."/>
            <person name="Engstrom P."/>
            <person name="Fagiolini M."/>
            <person name="Faulkner G."/>
            <person name="Fletcher C.F."/>
            <person name="Fukushima T."/>
            <person name="Furuno M."/>
            <person name="Futaki S."/>
            <person name="Gariboldi M."/>
            <person name="Georgii-Hemming P."/>
            <person name="Gingeras T.R."/>
            <person name="Gojobori T."/>
            <person name="Green R.E."/>
            <person name="Gustincich S."/>
            <person name="Harbers M."/>
            <person name="Hayashi Y."/>
            <person name="Hensch T.K."/>
            <person name="Hirokawa N."/>
            <person name="Hill D."/>
            <person name="Huminiecki L."/>
            <person name="Iacono M."/>
            <person name="Ikeo K."/>
            <person name="Iwama A."/>
            <person name="Ishikawa T."/>
            <person name="Jakt M."/>
            <person name="Kanapin A."/>
            <person name="Katoh M."/>
            <person name="Kawasawa Y."/>
            <person name="Kelso J."/>
            <person name="Kitamura H."/>
            <person name="Kitano H."/>
            <person name="Kollias G."/>
            <person name="Krishnan S.P."/>
            <person name="Kruger A."/>
            <person name="Kummerfeld S.K."/>
            <person name="Kurochkin I.V."/>
            <person name="Lareau L.F."/>
            <person name="Lazarevic D."/>
            <person name="Lipovich L."/>
            <person name="Liu J."/>
            <person name="Liuni S."/>
            <person name="McWilliam S."/>
            <person name="Madan Babu M."/>
            <person name="Madera M."/>
            <person name="Marchionni L."/>
            <person name="Matsuda H."/>
            <person name="Matsuzawa S."/>
            <person name="Miki H."/>
            <person name="Mignone F."/>
            <person name="Miyake S."/>
            <person name="Morris K."/>
            <person name="Mottagui-Tabar S."/>
            <person name="Mulder N."/>
            <person name="Nakano N."/>
            <person name="Nakauchi H."/>
            <person name="Ng P."/>
            <person name="Nilsson R."/>
            <person name="Nishiguchi S."/>
            <person name="Nishikawa S."/>
            <person name="Nori F."/>
            <person name="Ohara O."/>
            <person name="Okazaki Y."/>
            <person name="Orlando V."/>
            <person name="Pang K.C."/>
            <person name="Pavan W.J."/>
            <person name="Pavesi G."/>
            <person name="Pesole G."/>
            <person name="Petrovsky N."/>
            <person name="Piazza S."/>
            <person name="Reed J."/>
            <person name="Reid J.F."/>
            <person name="Ring B.Z."/>
            <person name="Ringwald M."/>
            <person name="Rost B."/>
            <person name="Ruan Y."/>
            <person name="Salzberg S.L."/>
            <person name="Sandelin A."/>
            <person name="Schneider C."/>
            <person name="Schoenbach C."/>
            <person name="Sekiguchi K."/>
            <person name="Semple C.A."/>
            <person name="Seno S."/>
            <person name="Sessa L."/>
            <person name="Sheng Y."/>
            <person name="Shibata Y."/>
            <person name="Shimada H."/>
            <person name="Shimada K."/>
            <person name="Silva D."/>
            <person name="Sinclair B."/>
            <person name="Sperling S."/>
            <person name="Stupka E."/>
            <person name="Sugiura K."/>
            <person name="Sultana R."/>
            <person name="Takenaka Y."/>
            <person name="Taki K."/>
            <person name="Tammoja K."/>
            <person name="Tan S.L."/>
            <person name="Tang S."/>
            <person name="Taylor M.S."/>
            <person name="Tegner J."/>
            <person name="Teichmann S.A."/>
            <person name="Ueda H.R."/>
            <person name="van Nimwegen E."/>
            <person name="Verardo R."/>
            <person name="Wei C.L."/>
            <person name="Yagi K."/>
            <person name="Yamanishi H."/>
            <person name="Zabarovsky E."/>
            <person name="Zhu S."/>
            <person name="Zimmer A."/>
            <person name="Hide W."/>
            <person name="Bult C."/>
            <person name="Grimmond S.M."/>
            <person name="Teasdale R.D."/>
            <person name="Liu E.T."/>
            <person name="Brusic V."/>
            <person name="Quackenbush J."/>
            <person name="Wahlestedt C."/>
            <person name="Mattick J.S."/>
            <person name="Hume D.A."/>
            <person name="Kai C."/>
            <person name="Sasaki D."/>
            <person name="Tomaru Y."/>
            <person name="Fukuda S."/>
            <person name="Kanamori-Katayama M."/>
            <person name="Suzuki M."/>
            <person name="Aoki J."/>
            <person name="Arakawa T."/>
            <person name="Iida J."/>
            <person name="Imamura K."/>
            <person name="Itoh M."/>
            <person name="Kato T."/>
            <person name="Kawaji H."/>
            <person name="Kawagashira N."/>
            <person name="Kawashima T."/>
            <person name="Kojima M."/>
            <person name="Kondo S."/>
            <person name="Konno H."/>
            <person name="Nakano K."/>
            <person name="Ninomiya N."/>
            <person name="Nishio T."/>
            <person name="Okada M."/>
            <person name="Plessy C."/>
            <person name="Shibata K."/>
            <person name="Shiraki T."/>
            <person name="Suzuki S."/>
            <person name="Tagami M."/>
            <person name="Waki K."/>
            <person name="Watahiki A."/>
            <person name="Okamura-Oho Y."/>
            <person name="Suzuki H."/>
            <person name="Kawai J."/>
            <person name="Hayashizaki Y."/>
        </authorList>
    </citation>
    <scope>NUCLEOTIDE SEQUENCE [LARGE SCALE MRNA] (ISOFORMS 3 AND 4)</scope>
    <source>
        <strain>NOD</strain>
        <tissue>Dendritic cell</tissue>
    </source>
</reference>
<reference key="3">
    <citation type="journal article" date="2009" name="PLoS Biol.">
        <title>Lineage-specific biology revealed by a finished genome assembly of the mouse.</title>
        <authorList>
            <person name="Church D.M."/>
            <person name="Goodstadt L."/>
            <person name="Hillier L.W."/>
            <person name="Zody M.C."/>
            <person name="Goldstein S."/>
            <person name="She X."/>
            <person name="Bult C.J."/>
            <person name="Agarwala R."/>
            <person name="Cherry J.L."/>
            <person name="DiCuccio M."/>
            <person name="Hlavina W."/>
            <person name="Kapustin Y."/>
            <person name="Meric P."/>
            <person name="Maglott D."/>
            <person name="Birtle Z."/>
            <person name="Marques A.C."/>
            <person name="Graves T."/>
            <person name="Zhou S."/>
            <person name="Teague B."/>
            <person name="Potamousis K."/>
            <person name="Churas C."/>
            <person name="Place M."/>
            <person name="Herschleb J."/>
            <person name="Runnheim R."/>
            <person name="Forrest D."/>
            <person name="Amos-Landgraf J."/>
            <person name="Schwartz D.C."/>
            <person name="Cheng Z."/>
            <person name="Lindblad-Toh K."/>
            <person name="Eichler E.E."/>
            <person name="Ponting C.P."/>
        </authorList>
    </citation>
    <scope>NUCLEOTIDE SEQUENCE [LARGE SCALE GENOMIC DNA]</scope>
    <source>
        <strain>C57BL/6J</strain>
    </source>
</reference>
<reference key="4">
    <citation type="journal article" date="2004" name="Genome Res.">
        <title>The status, quality, and expansion of the NIH full-length cDNA project: the Mammalian Gene Collection (MGC).</title>
        <authorList>
            <consortium name="The MGC Project Team"/>
        </authorList>
    </citation>
    <scope>NUCLEOTIDE SEQUENCE [LARGE SCALE MRNA] (ISOFORM 2)</scope>
    <source>
        <tissue>Brain</tissue>
    </source>
</reference>
<reference key="5">
    <citation type="journal article" date="2002" name="Eur. J. Biochem.">
        <title>The Ikaros family protein Eos associates with C-terminal-binding protein corepressors.</title>
        <authorList>
            <person name="Perdomo J."/>
            <person name="Crossley M."/>
        </authorList>
    </citation>
    <scope>INTERACTION WITH CTBP2</scope>
</reference>
<reference key="6">
    <citation type="journal article" date="2007" name="Mol. Cell. Biol.">
        <title>Eos, MITF, and PU.1 recruit corepressors to osteoclast-specific genes in committed myeloid progenitors.</title>
        <authorList>
            <person name="Hu R."/>
            <person name="Sharma S.M."/>
            <person name="Bronisz A."/>
            <person name="Srinivasan R."/>
            <person name="Sankar U."/>
            <person name="Ostrowski M.C."/>
        </authorList>
    </citation>
    <scope>FUNCTION</scope>
    <scope>TISSUE SPECIFICITY</scope>
    <scope>INTERACTION WITH SPI1 AND MITF</scope>
</reference>
<reference key="7">
    <citation type="journal article" date="2009" name="Science">
        <title>Eos mediates Foxp3-dependent gene silencing in CD4+ regulatory T cells.</title>
        <authorList>
            <person name="Pan F."/>
            <person name="Yu H."/>
            <person name="Dang E.V."/>
            <person name="Barbi J."/>
            <person name="Pan X."/>
            <person name="Grosso J.F."/>
            <person name="Jinasena D."/>
            <person name="Sharma S.M."/>
            <person name="McCadden E.M."/>
            <person name="Getnet D."/>
            <person name="Drake C.G."/>
            <person name="Liu J.O."/>
            <person name="Ostrowski M.C."/>
            <person name="Pardoll D.M."/>
        </authorList>
    </citation>
    <scope>FUNCTION</scope>
    <scope>INTERACTION WITH FOXP3 AND CTBP1</scope>
</reference>
<keyword id="KW-0007">Acetylation</keyword>
<keyword id="KW-0025">Alternative splicing</keyword>
<keyword id="KW-0238">DNA-binding</keyword>
<keyword id="KW-1017">Isopeptide bond</keyword>
<keyword id="KW-0479">Metal-binding</keyword>
<keyword id="KW-0539">Nucleus</keyword>
<keyword id="KW-0597">Phosphoprotein</keyword>
<keyword id="KW-1185">Reference proteome</keyword>
<keyword id="KW-0677">Repeat</keyword>
<keyword id="KW-0678">Repressor</keyword>
<keyword id="KW-0804">Transcription</keyword>
<keyword id="KW-0805">Transcription regulation</keyword>
<keyword id="KW-0832">Ubl conjugation</keyword>
<keyword id="KW-0862">Zinc</keyword>
<keyword id="KW-0863">Zinc-finger</keyword>
<gene>
    <name type="primary">Ikzf4</name>
    <name type="synonym">Zfpn1a4</name>
</gene>